<dbReference type="EC" id="3.6.5.3" evidence="2"/>
<dbReference type="EMBL" id="CP000767">
    <property type="protein sequence ID" value="EAU01268.1"/>
    <property type="molecule type" value="Genomic_DNA"/>
</dbReference>
<dbReference type="RefSeq" id="WP_009650564.1">
    <property type="nucleotide sequence ID" value="NC_009715.2"/>
</dbReference>
<dbReference type="SMR" id="A7GZK6"/>
<dbReference type="STRING" id="360105.CCV52592_0173"/>
<dbReference type="GeneID" id="61002661"/>
<dbReference type="KEGG" id="ccv:CCV52592_0173"/>
<dbReference type="HOGENOM" id="CLU_007265_0_0_7"/>
<dbReference type="OrthoDB" id="9803139at2"/>
<dbReference type="Proteomes" id="UP000006380">
    <property type="component" value="Chromosome"/>
</dbReference>
<dbReference type="GO" id="GO:0005829">
    <property type="term" value="C:cytosol"/>
    <property type="evidence" value="ECO:0007669"/>
    <property type="project" value="TreeGrafter"/>
</dbReference>
<dbReference type="GO" id="GO:0005525">
    <property type="term" value="F:GTP binding"/>
    <property type="evidence" value="ECO:0007669"/>
    <property type="project" value="UniProtKB-UniRule"/>
</dbReference>
<dbReference type="GO" id="GO:0003924">
    <property type="term" value="F:GTPase activity"/>
    <property type="evidence" value="ECO:0007669"/>
    <property type="project" value="InterPro"/>
</dbReference>
<dbReference type="GO" id="GO:0003746">
    <property type="term" value="F:translation elongation factor activity"/>
    <property type="evidence" value="ECO:0007669"/>
    <property type="project" value="UniProtKB-UniRule"/>
</dbReference>
<dbReference type="CDD" id="cd01884">
    <property type="entry name" value="EF_Tu"/>
    <property type="match status" value="1"/>
</dbReference>
<dbReference type="CDD" id="cd03697">
    <property type="entry name" value="EFTU_II"/>
    <property type="match status" value="1"/>
</dbReference>
<dbReference type="CDD" id="cd03707">
    <property type="entry name" value="EFTU_III"/>
    <property type="match status" value="1"/>
</dbReference>
<dbReference type="FunFam" id="2.40.30.10:FF:000001">
    <property type="entry name" value="Elongation factor Tu"/>
    <property type="match status" value="1"/>
</dbReference>
<dbReference type="FunFam" id="3.40.50.300:FF:000003">
    <property type="entry name" value="Elongation factor Tu"/>
    <property type="match status" value="1"/>
</dbReference>
<dbReference type="Gene3D" id="3.40.50.300">
    <property type="entry name" value="P-loop containing nucleotide triphosphate hydrolases"/>
    <property type="match status" value="1"/>
</dbReference>
<dbReference type="Gene3D" id="2.40.30.10">
    <property type="entry name" value="Translation factors"/>
    <property type="match status" value="2"/>
</dbReference>
<dbReference type="HAMAP" id="MF_00118_B">
    <property type="entry name" value="EF_Tu_B"/>
    <property type="match status" value="1"/>
</dbReference>
<dbReference type="InterPro" id="IPR041709">
    <property type="entry name" value="EF-Tu_GTP-bd"/>
</dbReference>
<dbReference type="InterPro" id="IPR050055">
    <property type="entry name" value="EF-Tu_GTPase"/>
</dbReference>
<dbReference type="InterPro" id="IPR004161">
    <property type="entry name" value="EFTu-like_2"/>
</dbReference>
<dbReference type="InterPro" id="IPR033720">
    <property type="entry name" value="EFTU_2"/>
</dbReference>
<dbReference type="InterPro" id="IPR031157">
    <property type="entry name" value="G_TR_CS"/>
</dbReference>
<dbReference type="InterPro" id="IPR027417">
    <property type="entry name" value="P-loop_NTPase"/>
</dbReference>
<dbReference type="InterPro" id="IPR005225">
    <property type="entry name" value="Small_GTP-bd"/>
</dbReference>
<dbReference type="InterPro" id="IPR000795">
    <property type="entry name" value="T_Tr_GTP-bd_dom"/>
</dbReference>
<dbReference type="InterPro" id="IPR009000">
    <property type="entry name" value="Transl_B-barrel_sf"/>
</dbReference>
<dbReference type="InterPro" id="IPR009001">
    <property type="entry name" value="Transl_elong_EF1A/Init_IF2_C"/>
</dbReference>
<dbReference type="InterPro" id="IPR004541">
    <property type="entry name" value="Transl_elong_EFTu/EF1A_bac/org"/>
</dbReference>
<dbReference type="InterPro" id="IPR004160">
    <property type="entry name" value="Transl_elong_EFTu/EF1A_C"/>
</dbReference>
<dbReference type="NCBIfam" id="TIGR00485">
    <property type="entry name" value="EF-Tu"/>
    <property type="match status" value="1"/>
</dbReference>
<dbReference type="NCBIfam" id="NF000766">
    <property type="entry name" value="PRK00049.1"/>
    <property type="match status" value="1"/>
</dbReference>
<dbReference type="NCBIfam" id="NF009372">
    <property type="entry name" value="PRK12735.1"/>
    <property type="match status" value="1"/>
</dbReference>
<dbReference type="NCBIfam" id="NF009373">
    <property type="entry name" value="PRK12736.1"/>
    <property type="match status" value="1"/>
</dbReference>
<dbReference type="NCBIfam" id="TIGR00231">
    <property type="entry name" value="small_GTP"/>
    <property type="match status" value="1"/>
</dbReference>
<dbReference type="PANTHER" id="PTHR43721:SF22">
    <property type="entry name" value="ELONGATION FACTOR TU, MITOCHONDRIAL"/>
    <property type="match status" value="1"/>
</dbReference>
<dbReference type="PANTHER" id="PTHR43721">
    <property type="entry name" value="ELONGATION FACTOR TU-RELATED"/>
    <property type="match status" value="1"/>
</dbReference>
<dbReference type="Pfam" id="PF00009">
    <property type="entry name" value="GTP_EFTU"/>
    <property type="match status" value="1"/>
</dbReference>
<dbReference type="Pfam" id="PF03144">
    <property type="entry name" value="GTP_EFTU_D2"/>
    <property type="match status" value="1"/>
</dbReference>
<dbReference type="Pfam" id="PF03143">
    <property type="entry name" value="GTP_EFTU_D3"/>
    <property type="match status" value="1"/>
</dbReference>
<dbReference type="PRINTS" id="PR00315">
    <property type="entry name" value="ELONGATNFCT"/>
</dbReference>
<dbReference type="SUPFAM" id="SSF50465">
    <property type="entry name" value="EF-Tu/eEF-1alpha/eIF2-gamma C-terminal domain"/>
    <property type="match status" value="1"/>
</dbReference>
<dbReference type="SUPFAM" id="SSF52540">
    <property type="entry name" value="P-loop containing nucleoside triphosphate hydrolases"/>
    <property type="match status" value="1"/>
</dbReference>
<dbReference type="SUPFAM" id="SSF50447">
    <property type="entry name" value="Translation proteins"/>
    <property type="match status" value="1"/>
</dbReference>
<dbReference type="PROSITE" id="PS00301">
    <property type="entry name" value="G_TR_1"/>
    <property type="match status" value="1"/>
</dbReference>
<dbReference type="PROSITE" id="PS51722">
    <property type="entry name" value="G_TR_2"/>
    <property type="match status" value="1"/>
</dbReference>
<sequence length="399" mass="43746">MAKEKFSRNKPHVNIGTIGHVDHGKTTLTAAISAVLSRKGLAEMKDYDNIDNAPEEKERGITIATSHIEYETEKRHYAHVDCPGHADYVKNMITGAAQMDGAILVVSAADGPMPQTREHILLSRQVGVPYIVVFMNKADMVDDAELLELVEMEIRELLNEYNFPGDDTPIISGSALKALEEAKAGVDGEWSAKVLELMDKVDEYIPTPVRATDKDFLMPIEDVFSISGRGTVVTGRIEKGVVKVGDTIEIVGIKPTQTTTVTGVEMFRKEMEQGEAGDNVGVLLRGTKKEDVERGMVLCKPKSITPHTKFEGEVYILTKEEGGRHTPFFNNYRPQFYVRTTDVTGSITLPEGTEMVMPGDNVRISVELIAPVALEEGTRFAIREGGRTVGSGVVSKILA</sequence>
<reference key="1">
    <citation type="submission" date="2007-07" db="EMBL/GenBank/DDBJ databases">
        <title>Genome sequence of Campylobacter curvus 525.92 isolated from human feces.</title>
        <authorList>
            <person name="Fouts D.E."/>
            <person name="Mongodin E.F."/>
            <person name="Puiu D."/>
            <person name="Sebastian Y."/>
            <person name="Miller W.G."/>
            <person name="Mandrell R.E."/>
            <person name="Lastovica A.J."/>
            <person name="Nelson K.E."/>
        </authorList>
    </citation>
    <scope>NUCLEOTIDE SEQUENCE [LARGE SCALE GENOMIC DNA]</scope>
    <source>
        <strain>525.92</strain>
    </source>
</reference>
<protein>
    <recommendedName>
        <fullName evidence="2">Elongation factor Tu</fullName>
        <shortName evidence="2">EF-Tu</shortName>
        <ecNumber evidence="2">3.6.5.3</ecNumber>
    </recommendedName>
</protein>
<evidence type="ECO:0000250" key="1"/>
<evidence type="ECO:0000255" key="2">
    <source>
        <dbReference type="HAMAP-Rule" id="MF_00118"/>
    </source>
</evidence>
<keyword id="KW-0963">Cytoplasm</keyword>
<keyword id="KW-0251">Elongation factor</keyword>
<keyword id="KW-0342">GTP-binding</keyword>
<keyword id="KW-0378">Hydrolase</keyword>
<keyword id="KW-0460">Magnesium</keyword>
<keyword id="KW-0479">Metal-binding</keyword>
<keyword id="KW-0547">Nucleotide-binding</keyword>
<keyword id="KW-0648">Protein biosynthesis</keyword>
<keyword id="KW-1185">Reference proteome</keyword>
<proteinExistence type="inferred from homology"/>
<accession>A7GZK6</accession>
<name>EFTU_CAMC5</name>
<organism>
    <name type="scientific">Campylobacter curvus (strain 525.92)</name>
    <dbReference type="NCBI Taxonomy" id="360105"/>
    <lineage>
        <taxon>Bacteria</taxon>
        <taxon>Pseudomonadati</taxon>
        <taxon>Campylobacterota</taxon>
        <taxon>Epsilonproteobacteria</taxon>
        <taxon>Campylobacterales</taxon>
        <taxon>Campylobacteraceae</taxon>
        <taxon>Campylobacter</taxon>
    </lineage>
</organism>
<feature type="chain" id="PRO_1000015627" description="Elongation factor Tu">
    <location>
        <begin position="1"/>
        <end position="399"/>
    </location>
</feature>
<feature type="domain" description="tr-type G">
    <location>
        <begin position="10"/>
        <end position="209"/>
    </location>
</feature>
<feature type="region of interest" description="G1" evidence="1">
    <location>
        <begin position="19"/>
        <end position="26"/>
    </location>
</feature>
<feature type="region of interest" description="G2" evidence="1">
    <location>
        <begin position="60"/>
        <end position="64"/>
    </location>
</feature>
<feature type="region of interest" description="G3" evidence="1">
    <location>
        <begin position="81"/>
        <end position="84"/>
    </location>
</feature>
<feature type="region of interest" description="G4" evidence="1">
    <location>
        <begin position="136"/>
        <end position="139"/>
    </location>
</feature>
<feature type="region of interest" description="G5" evidence="1">
    <location>
        <begin position="174"/>
        <end position="176"/>
    </location>
</feature>
<feature type="binding site" evidence="2">
    <location>
        <begin position="19"/>
        <end position="26"/>
    </location>
    <ligand>
        <name>GTP</name>
        <dbReference type="ChEBI" id="CHEBI:37565"/>
    </ligand>
</feature>
<feature type="binding site" evidence="2">
    <location>
        <position position="26"/>
    </location>
    <ligand>
        <name>Mg(2+)</name>
        <dbReference type="ChEBI" id="CHEBI:18420"/>
    </ligand>
</feature>
<feature type="binding site" evidence="2">
    <location>
        <begin position="81"/>
        <end position="85"/>
    </location>
    <ligand>
        <name>GTP</name>
        <dbReference type="ChEBI" id="CHEBI:37565"/>
    </ligand>
</feature>
<feature type="binding site" evidence="2">
    <location>
        <begin position="136"/>
        <end position="139"/>
    </location>
    <ligand>
        <name>GTP</name>
        <dbReference type="ChEBI" id="CHEBI:37565"/>
    </ligand>
</feature>
<comment type="function">
    <text evidence="2">GTP hydrolase that promotes the GTP-dependent binding of aminoacyl-tRNA to the A-site of ribosomes during protein biosynthesis.</text>
</comment>
<comment type="catalytic activity">
    <reaction evidence="2">
        <text>GTP + H2O = GDP + phosphate + H(+)</text>
        <dbReference type="Rhea" id="RHEA:19669"/>
        <dbReference type="ChEBI" id="CHEBI:15377"/>
        <dbReference type="ChEBI" id="CHEBI:15378"/>
        <dbReference type="ChEBI" id="CHEBI:37565"/>
        <dbReference type="ChEBI" id="CHEBI:43474"/>
        <dbReference type="ChEBI" id="CHEBI:58189"/>
        <dbReference type="EC" id="3.6.5.3"/>
    </reaction>
    <physiologicalReaction direction="left-to-right" evidence="2">
        <dbReference type="Rhea" id="RHEA:19670"/>
    </physiologicalReaction>
</comment>
<comment type="subunit">
    <text evidence="2">Monomer.</text>
</comment>
<comment type="subcellular location">
    <subcellularLocation>
        <location evidence="2">Cytoplasm</location>
    </subcellularLocation>
</comment>
<comment type="similarity">
    <text evidence="2">Belongs to the TRAFAC class translation factor GTPase superfamily. Classic translation factor GTPase family. EF-Tu/EF-1A subfamily.</text>
</comment>
<gene>
    <name evidence="2" type="primary">tuf</name>
    <name type="ordered locus">Ccur92_13440</name>
    <name type="ORF">CCV52592_0173</name>
</gene>